<protein>
    <recommendedName>
        <fullName>Uridylate kinase</fullName>
        <shortName>UK</shortName>
        <ecNumber evidence="4">2.7.4.22</ecNumber>
    </recommendedName>
    <alternativeName>
        <fullName>Uridine monophosphate kinase</fullName>
        <shortName>UMP kinase</shortName>
        <shortName>UMPK</shortName>
    </alternativeName>
</protein>
<keyword id="KW-0002">3D-structure</keyword>
<keyword id="KW-0021">Allosteric enzyme</keyword>
<keyword id="KW-0067">ATP-binding</keyword>
<keyword id="KW-0963">Cytoplasm</keyword>
<keyword id="KW-0903">Direct protein sequencing</keyword>
<keyword id="KW-0418">Kinase</keyword>
<keyword id="KW-0547">Nucleotide-binding</keyword>
<keyword id="KW-0665">Pyrimidine biosynthesis</keyword>
<keyword id="KW-1185">Reference proteome</keyword>
<keyword id="KW-0808">Transferase</keyword>
<name>PYRH_ECOLI</name>
<comment type="function">
    <text evidence="6">Catalyzes the reversible phosphorylation of UMP to UDP, with ATP as the most efficient phosphate donor.</text>
</comment>
<comment type="catalytic activity">
    <reaction evidence="4">
        <text>UMP + ATP = UDP + ADP</text>
        <dbReference type="Rhea" id="RHEA:24400"/>
        <dbReference type="ChEBI" id="CHEBI:30616"/>
        <dbReference type="ChEBI" id="CHEBI:57865"/>
        <dbReference type="ChEBI" id="CHEBI:58223"/>
        <dbReference type="ChEBI" id="CHEBI:456216"/>
        <dbReference type="EC" id="2.7.4.22"/>
    </reaction>
</comment>
<comment type="activity regulation">
    <text evidence="3 4 5">Allosterically activated by GTP. Competitively inhibited by magnesium-free UTP. Magnesium-bound UTP is unable to inhibit enzyme activity.</text>
</comment>
<comment type="biophysicochemical properties">
    <kinetics>
        <KM evidence="4">210 uM for ATP (in the presence of 0.3 mM UMP)</KM>
        <KM evidence="4">50 uM for UMP (in the presence of 0.2 mM ATP)</KM>
        <Vmax evidence="4">62.4 umol/min/mg enzyme with ATP as substrate (in the presence of 0.3 mM UMP)</Vmax>
        <Vmax evidence="4">46.1 umol/min/mg enzyme with UMP as substrate (in the presence of 0.2 mM ATP)</Vmax>
    </kinetics>
</comment>
<comment type="pathway">
    <text evidence="4">Pyrimidine metabolism; CTP biosynthesis via de novo pathway; UDP from UMP (UMPK route): step 1/1.</text>
</comment>
<comment type="subunit">
    <text evidence="3 6">Homohexamer.</text>
</comment>
<comment type="subcellular location">
    <subcellularLocation>
        <location evidence="8">Cytoplasm</location>
    </subcellularLocation>
    <text>Is predominantly localized near the bacterial membranes.</text>
</comment>
<comment type="miscellaneous">
    <text>The peripheral distribution of PyrH is related most probably to its role in the synthesis of membrane sugar components.</text>
</comment>
<comment type="similarity">
    <text evidence="9">Belongs to the UMP kinase family.</text>
</comment>
<organism>
    <name type="scientific">Escherichia coli (strain K12)</name>
    <dbReference type="NCBI Taxonomy" id="83333"/>
    <lineage>
        <taxon>Bacteria</taxon>
        <taxon>Pseudomonadati</taxon>
        <taxon>Pseudomonadota</taxon>
        <taxon>Gammaproteobacteria</taxon>
        <taxon>Enterobacterales</taxon>
        <taxon>Enterobacteriaceae</taxon>
        <taxon>Escherichia</taxon>
    </lineage>
</organism>
<accession>P0A7E9</accession>
<accession>P29464</accession>
<proteinExistence type="evidence at protein level"/>
<reference key="1">
    <citation type="journal article" date="1992" name="Life Sci. Adv. (Genet.)">
        <title>Cloning, nucleotide sequence and expression of the Escherichia coli K-12 pyrH gene encoding UMP kinase.</title>
        <authorList>
            <person name="Smallshaw J.E."/>
            <person name="Kelln R.A."/>
        </authorList>
    </citation>
    <scope>NUCLEOTIDE SEQUENCE [GENOMIC DNA]</scope>
    <scope>CHARACTERIZATION</scope>
    <source>
        <strain>K12</strain>
    </source>
</reference>
<reference key="2">
    <citation type="journal article" date="1992" name="J. Bacteriol.">
        <title>Identification and characterization of the smbA gene, a suppressor of the mukB null mutant of Escherichia coli.</title>
        <authorList>
            <person name="Yamanaka K."/>
            <person name="Ogura T."/>
            <person name="Niki H."/>
            <person name="Hiraga S."/>
        </authorList>
    </citation>
    <scope>NUCLEOTIDE SEQUENCE [GENOMIC DNA]</scope>
</reference>
<reference key="3">
    <citation type="journal article" date="1995" name="Biochemistry">
        <title>Escherichia coli UMP-kinase, a member of the aspartokinase family, is a hexamer regulated by guanine nucleotides and UTP.</title>
        <authorList>
            <person name="Serina L."/>
            <person name="Blondin C."/>
            <person name="Krin E."/>
            <person name="Sismeiro O."/>
            <person name="Danchin A."/>
            <person name="Sakamoto H."/>
            <person name="Gilles A.-M."/>
            <person name="Barzu O."/>
        </authorList>
    </citation>
    <scope>NUCLEOTIDE SEQUENCE [GENOMIC DNA]</scope>
    <scope>PROTEIN SEQUENCE OF 2-8</scope>
    <scope>FUNCTION</scope>
    <scope>BIOPHYSICOCHEMICAL PROPERTIES</scope>
    <scope>CHARACTERIZATION</scope>
    <scope>SUBUNIT</scope>
    <scope>MUTAGENESIS OF ASP-201</scope>
</reference>
<reference key="4">
    <citation type="journal article" date="1994" name="Nucleic Acids Res.">
        <title>Systematic sequencing of the Escherichia coli genome: analysis of the 2.4-4.1 min (110,917-193,643 bp) region.</title>
        <authorList>
            <person name="Fujita N."/>
            <person name="Mori H."/>
            <person name="Yura T."/>
            <person name="Ishihama A."/>
        </authorList>
    </citation>
    <scope>NUCLEOTIDE SEQUENCE [LARGE SCALE GENOMIC DNA]</scope>
    <source>
        <strain>K12 / W3110 / ATCC 27325 / DSM 5911</strain>
    </source>
</reference>
<reference key="5">
    <citation type="submission" date="1996-02" db="EMBL/GenBank/DDBJ databases">
        <title>Systematic sequencing of the Escherichia coli genome: analysis of the 4.0 - 6.0 min (189,987 - 281,416bp) region.</title>
        <authorList>
            <person name="Takemoto K."/>
            <person name="Mori H."/>
            <person name="Murayama N."/>
            <person name="Kataoka K."/>
            <person name="Yano M."/>
            <person name="Itoh T."/>
            <person name="Yamamoto Y."/>
            <person name="Inokuchi H."/>
            <person name="Miki T."/>
            <person name="Hatada E."/>
            <person name="Fukuda R."/>
            <person name="Ichihara S."/>
            <person name="Mizuno T."/>
            <person name="Makino K."/>
            <person name="Nakata A."/>
            <person name="Yura T."/>
            <person name="Sampei G."/>
            <person name="Mizobuchi K."/>
        </authorList>
    </citation>
    <scope>NUCLEOTIDE SEQUENCE [LARGE SCALE GENOMIC DNA]</scope>
    <source>
        <strain>K12 / W3110 / ATCC 27325 / DSM 5911</strain>
    </source>
</reference>
<reference key="6">
    <citation type="submission" date="1997-01" db="EMBL/GenBank/DDBJ databases">
        <title>Sequence of minutes 4-25 of Escherichia coli.</title>
        <authorList>
            <person name="Chung E."/>
            <person name="Allen E."/>
            <person name="Araujo R."/>
            <person name="Aparicio A.M."/>
            <person name="Davis K."/>
            <person name="Duncan M."/>
            <person name="Federspiel N."/>
            <person name="Hyman R."/>
            <person name="Kalman S."/>
            <person name="Komp C."/>
            <person name="Kurdi O."/>
            <person name="Lew H."/>
            <person name="Lin D."/>
            <person name="Namath A."/>
            <person name="Oefner P."/>
            <person name="Roberts D."/>
            <person name="Schramm S."/>
            <person name="Davis R.W."/>
        </authorList>
    </citation>
    <scope>NUCLEOTIDE SEQUENCE [LARGE SCALE GENOMIC DNA]</scope>
    <source>
        <strain>K12 / MG1655 / ATCC 47076</strain>
    </source>
</reference>
<reference key="7">
    <citation type="journal article" date="1997" name="Science">
        <title>The complete genome sequence of Escherichia coli K-12.</title>
        <authorList>
            <person name="Blattner F.R."/>
            <person name="Plunkett G. III"/>
            <person name="Bloch C.A."/>
            <person name="Perna N.T."/>
            <person name="Burland V."/>
            <person name="Riley M."/>
            <person name="Collado-Vides J."/>
            <person name="Glasner J.D."/>
            <person name="Rode C.K."/>
            <person name="Mayhew G.F."/>
            <person name="Gregor J."/>
            <person name="Davis N.W."/>
            <person name="Kirkpatrick H.A."/>
            <person name="Goeden M.A."/>
            <person name="Rose D.J."/>
            <person name="Mau B."/>
            <person name="Shao Y."/>
        </authorList>
    </citation>
    <scope>NUCLEOTIDE SEQUENCE [LARGE SCALE GENOMIC DNA]</scope>
    <source>
        <strain>K12 / MG1655 / ATCC 47076</strain>
    </source>
</reference>
<reference key="8">
    <citation type="journal article" date="2006" name="Mol. Syst. Biol.">
        <title>Highly accurate genome sequences of Escherichia coli K-12 strains MG1655 and W3110.</title>
        <authorList>
            <person name="Hayashi K."/>
            <person name="Morooka N."/>
            <person name="Yamamoto Y."/>
            <person name="Fujita K."/>
            <person name="Isono K."/>
            <person name="Choi S."/>
            <person name="Ohtsubo E."/>
            <person name="Baba T."/>
            <person name="Wanner B.L."/>
            <person name="Mori H."/>
            <person name="Horiuchi T."/>
        </authorList>
    </citation>
    <scope>NUCLEOTIDE SEQUENCE [LARGE SCALE GENOMIC DNA]</scope>
    <source>
        <strain>K12 / W3110 / ATCC 27325 / DSM 5911</strain>
    </source>
</reference>
<reference key="9">
    <citation type="journal article" date="1994" name="Mol. Gen. Genet.">
        <title>Multicopy suppressors, mssA and mssB, of an smbA mutation of Escherichia coli.</title>
        <authorList>
            <person name="Yamanaka K."/>
            <person name="Ogura T."/>
            <person name="Koonin E.V."/>
            <person name="Niki H."/>
            <person name="Hiraga S."/>
        </authorList>
    </citation>
    <scope>CHARACTERIZATION</scope>
</reference>
<reference key="10">
    <citation type="journal article" date="1999" name="J. Bacteriol.">
        <title>Immunochemical analysis of UMP kinase from Escherichia coli.</title>
        <authorList>
            <person name="Landais S."/>
            <person name="Gounon P."/>
            <person name="Laurent-Winter C."/>
            <person name="Mazie J.-C."/>
            <person name="Danchin A."/>
            <person name="Barzu O."/>
            <person name="Sakamoto H."/>
        </authorList>
    </citation>
    <scope>SUBCELLULAR LOCATION</scope>
</reference>
<reference key="11">
    <citation type="journal article" date="1998" name="J. Bacteriol.">
        <title>Mutational analysis of UMP kinase from Escherichia coli.</title>
        <authorList>
            <person name="Bucurenci N."/>
            <person name="Serina L."/>
            <person name="Zaharia C."/>
            <person name="Landais S."/>
            <person name="Danchin A."/>
            <person name="Barzu O."/>
        </authorList>
    </citation>
    <scope>MUTAGENESIS OF ARG-62; ASP-77; ASP-146; ASP-159; ASP-174 AND ASP-201</scope>
</reference>
<reference key="12">
    <citation type="journal article" date="2007" name="J. Biol. Chem.">
        <title>Regulatory mechanisms differ in UMP kinases from Gram-negative and Gram-positive bacteria.</title>
        <authorList>
            <person name="Evrin C."/>
            <person name="Straut M."/>
            <person name="Slavova-Azmanova N."/>
            <person name="Bucurenci N."/>
            <person name="Onu A."/>
            <person name="Assairi L."/>
            <person name="Ionescu M."/>
            <person name="Palibroda N."/>
            <person name="Barzu O."/>
            <person name="Gilles A.-M."/>
        </authorList>
    </citation>
    <scope>ACTIVITY REGULATION</scope>
    <scope>BIOPHYSICOCHEMICAL PROPERTIES</scope>
    <scope>CATALYTIC ACTIVITY</scope>
    <scope>PATHWAY</scope>
</reference>
<reference key="13">
    <citation type="journal article" date="2005" name="J. Biol. Chem.">
        <title>Structure of Escherichia coli UMP kinase differs from that of other nucleoside monophosphate kinases and sheds new light on enzyme regulation.</title>
        <authorList>
            <person name="Briozzo P."/>
            <person name="Evrin C."/>
            <person name="Meyer P."/>
            <person name="Assairi L."/>
            <person name="Joly N."/>
            <person name="Barzu O."/>
            <person name="Gilles A.-M."/>
        </authorList>
    </citation>
    <scope>X-RAY CRYSTALLOGRAPHY (2.3 ANGSTROMS) OF MUTANT ASN-159 IN COMPLEX WITH UMP; UDP AND UTP</scope>
    <scope>ACTIVITY REGULATION</scope>
    <scope>MUTAGENESIS OF THR-138 AND ASN-140</scope>
</reference>
<reference key="14">
    <citation type="journal article" date="2008" name="J. Biol. Chem.">
        <title>Structural and functional characterization of Escherichia coli UMP kinase in complex with its allosteric regulator GTP.</title>
        <authorList>
            <person name="Meyer P."/>
            <person name="Evrin C."/>
            <person name="Briozzo P."/>
            <person name="Joly N."/>
            <person name="Barzu O."/>
            <person name="Gilles A.-M."/>
        </authorList>
    </citation>
    <scope>X-RAY CRYSTALLOGRAPHY (2.80 ANGSTROMS) IN COMPLEX WITH GTP</scope>
    <scope>ACTIVITY REGULATION</scope>
    <scope>MUTAGENESIS OF ASP-93 AND ASN-140</scope>
</reference>
<gene>
    <name type="primary">pyrH</name>
    <name type="synonym">smbA</name>
    <name type="ordered locus">b0171</name>
    <name type="ordered locus">JW0166</name>
</gene>
<dbReference type="EC" id="2.7.4.22" evidence="4"/>
<dbReference type="EMBL" id="X78809">
    <property type="protein sequence ID" value="CAA55388.1"/>
    <property type="molecule type" value="Genomic_DNA"/>
</dbReference>
<dbReference type="EMBL" id="D13334">
    <property type="protein sequence ID" value="BAA02598.1"/>
    <property type="molecule type" value="Genomic_DNA"/>
</dbReference>
<dbReference type="EMBL" id="U70214">
    <property type="protein sequence ID" value="AAB08600.1"/>
    <property type="molecule type" value="Genomic_DNA"/>
</dbReference>
<dbReference type="EMBL" id="U00096">
    <property type="protein sequence ID" value="AAC73282.1"/>
    <property type="molecule type" value="Genomic_DNA"/>
</dbReference>
<dbReference type="EMBL" id="AP009048">
    <property type="protein sequence ID" value="BAB96747.1"/>
    <property type="molecule type" value="Genomic_DNA"/>
</dbReference>
<dbReference type="PIR" id="B45269">
    <property type="entry name" value="B45269"/>
</dbReference>
<dbReference type="RefSeq" id="NP_414713.1">
    <property type="nucleotide sequence ID" value="NC_000913.3"/>
</dbReference>
<dbReference type="RefSeq" id="WP_000224573.1">
    <property type="nucleotide sequence ID" value="NZ_STEB01000032.1"/>
</dbReference>
<dbReference type="PDB" id="2BND">
    <property type="method" value="X-ray"/>
    <property type="resolution" value="2.60 A"/>
    <property type="chains" value="A/B=1-241"/>
</dbReference>
<dbReference type="PDB" id="2BNE">
    <property type="method" value="X-ray"/>
    <property type="resolution" value="2.30 A"/>
    <property type="chains" value="A/B=1-241"/>
</dbReference>
<dbReference type="PDB" id="2BNF">
    <property type="method" value="X-ray"/>
    <property type="resolution" value="2.45 A"/>
    <property type="chains" value="A/B=1-241"/>
</dbReference>
<dbReference type="PDB" id="2V4Y">
    <property type="method" value="X-ray"/>
    <property type="resolution" value="2.80 A"/>
    <property type="chains" value="A/B/C/D/E/F=1-241"/>
</dbReference>
<dbReference type="PDBsum" id="2BND"/>
<dbReference type="PDBsum" id="2BNE"/>
<dbReference type="PDBsum" id="2BNF"/>
<dbReference type="PDBsum" id="2V4Y"/>
<dbReference type="SMR" id="P0A7E9"/>
<dbReference type="BioGRID" id="4262225">
    <property type="interactions" value="35"/>
</dbReference>
<dbReference type="BioGRID" id="849386">
    <property type="interactions" value="1"/>
</dbReference>
<dbReference type="DIP" id="DIP-31830N"/>
<dbReference type="FunCoup" id="P0A7E9">
    <property type="interactions" value="893"/>
</dbReference>
<dbReference type="IntAct" id="P0A7E9">
    <property type="interactions" value="54"/>
</dbReference>
<dbReference type="STRING" id="511145.b0171"/>
<dbReference type="ChEMBL" id="CHEMBL4523176"/>
<dbReference type="MoonProt" id="P0A7E9"/>
<dbReference type="jPOST" id="P0A7E9"/>
<dbReference type="PaxDb" id="511145-b0171"/>
<dbReference type="EnsemblBacteria" id="AAC73282">
    <property type="protein sequence ID" value="AAC73282"/>
    <property type="gene ID" value="b0171"/>
</dbReference>
<dbReference type="GeneID" id="93777254"/>
<dbReference type="GeneID" id="944989"/>
<dbReference type="KEGG" id="ecj:JW0166"/>
<dbReference type="KEGG" id="eco:b0171"/>
<dbReference type="KEGG" id="ecoc:C3026_00780"/>
<dbReference type="PATRIC" id="fig|1411691.4.peg.2109"/>
<dbReference type="EchoBASE" id="EB1501"/>
<dbReference type="eggNOG" id="COG0528">
    <property type="taxonomic scope" value="Bacteria"/>
</dbReference>
<dbReference type="HOGENOM" id="CLU_033861_0_0_6"/>
<dbReference type="InParanoid" id="P0A7E9"/>
<dbReference type="OMA" id="LMGDKQF"/>
<dbReference type="OrthoDB" id="9807458at2"/>
<dbReference type="PhylomeDB" id="P0A7E9"/>
<dbReference type="BioCyc" id="EcoCyc:UMPKI-MONOMER"/>
<dbReference type="BioCyc" id="MetaCyc:UMPKI-MONOMER"/>
<dbReference type="BRENDA" id="2.7.4.22">
    <property type="organism ID" value="2026"/>
</dbReference>
<dbReference type="SABIO-RK" id="P0A7E9"/>
<dbReference type="UniPathway" id="UPA00159">
    <property type="reaction ID" value="UER00275"/>
</dbReference>
<dbReference type="EvolutionaryTrace" id="P0A7E9"/>
<dbReference type="PRO" id="PR:P0A7E9"/>
<dbReference type="Proteomes" id="UP000000625">
    <property type="component" value="Chromosome"/>
</dbReference>
<dbReference type="GO" id="GO:0005829">
    <property type="term" value="C:cytosol"/>
    <property type="evidence" value="ECO:0000314"/>
    <property type="project" value="EcoCyc"/>
</dbReference>
<dbReference type="GO" id="GO:0005524">
    <property type="term" value="F:ATP binding"/>
    <property type="evidence" value="ECO:0007669"/>
    <property type="project" value="UniProtKB-KW"/>
</dbReference>
<dbReference type="GO" id="GO:0042802">
    <property type="term" value="F:identical protein binding"/>
    <property type="evidence" value="ECO:0000314"/>
    <property type="project" value="EcoCyc"/>
</dbReference>
<dbReference type="GO" id="GO:0033862">
    <property type="term" value="F:UMP kinase activity"/>
    <property type="evidence" value="ECO:0000314"/>
    <property type="project" value="EcoCyc"/>
</dbReference>
<dbReference type="GO" id="GO:0044210">
    <property type="term" value="P:'de novo' CTP biosynthetic process"/>
    <property type="evidence" value="ECO:0007669"/>
    <property type="project" value="UniProtKB-UniRule"/>
</dbReference>
<dbReference type="GO" id="GO:0006221">
    <property type="term" value="P:pyrimidine nucleotide biosynthetic process"/>
    <property type="evidence" value="ECO:0000314"/>
    <property type="project" value="EcoCyc"/>
</dbReference>
<dbReference type="GO" id="GO:0006225">
    <property type="term" value="P:UDP biosynthetic process"/>
    <property type="evidence" value="ECO:0000318"/>
    <property type="project" value="GO_Central"/>
</dbReference>
<dbReference type="CDD" id="cd04254">
    <property type="entry name" value="AAK_UMPK-PyrH-Ec"/>
    <property type="match status" value="1"/>
</dbReference>
<dbReference type="FunFam" id="3.40.1160.10:FF:000001">
    <property type="entry name" value="Uridylate kinase"/>
    <property type="match status" value="1"/>
</dbReference>
<dbReference type="Gene3D" id="3.40.1160.10">
    <property type="entry name" value="Acetylglutamate kinase-like"/>
    <property type="match status" value="1"/>
</dbReference>
<dbReference type="HAMAP" id="MF_01220_B">
    <property type="entry name" value="PyrH_B"/>
    <property type="match status" value="1"/>
</dbReference>
<dbReference type="InterPro" id="IPR036393">
    <property type="entry name" value="AceGlu_kinase-like_sf"/>
</dbReference>
<dbReference type="InterPro" id="IPR001048">
    <property type="entry name" value="Asp/Glu/Uridylate_kinase"/>
</dbReference>
<dbReference type="InterPro" id="IPR011817">
    <property type="entry name" value="Uridylate_kinase"/>
</dbReference>
<dbReference type="InterPro" id="IPR015963">
    <property type="entry name" value="Uridylate_kinase_bac"/>
</dbReference>
<dbReference type="NCBIfam" id="TIGR02075">
    <property type="entry name" value="pyrH_bact"/>
    <property type="match status" value="1"/>
</dbReference>
<dbReference type="PANTHER" id="PTHR42833">
    <property type="entry name" value="URIDYLATE KINASE"/>
    <property type="match status" value="1"/>
</dbReference>
<dbReference type="PANTHER" id="PTHR42833:SF4">
    <property type="entry name" value="URIDYLATE KINASE PUMPKIN, CHLOROPLASTIC"/>
    <property type="match status" value="1"/>
</dbReference>
<dbReference type="Pfam" id="PF00696">
    <property type="entry name" value="AA_kinase"/>
    <property type="match status" value="1"/>
</dbReference>
<dbReference type="PIRSF" id="PIRSF005650">
    <property type="entry name" value="Uridylate_kin"/>
    <property type="match status" value="1"/>
</dbReference>
<dbReference type="SUPFAM" id="SSF53633">
    <property type="entry name" value="Carbamate kinase-like"/>
    <property type="match status" value="1"/>
</dbReference>
<evidence type="ECO:0000250" key="1"/>
<evidence type="ECO:0000255" key="2"/>
<evidence type="ECO:0000269" key="3">
    <source>
    </source>
</evidence>
<evidence type="ECO:0000269" key="4">
    <source>
    </source>
</evidence>
<evidence type="ECO:0000269" key="5">
    <source>
    </source>
</evidence>
<evidence type="ECO:0000269" key="6">
    <source>
    </source>
</evidence>
<evidence type="ECO:0000269" key="7">
    <source>
    </source>
</evidence>
<evidence type="ECO:0000269" key="8">
    <source>
    </source>
</evidence>
<evidence type="ECO:0000305" key="9"/>
<evidence type="ECO:0007744" key="10">
    <source>
        <dbReference type="PDB" id="2BND"/>
    </source>
</evidence>
<evidence type="ECO:0007744" key="11">
    <source>
        <dbReference type="PDB" id="2BNE"/>
    </source>
</evidence>
<evidence type="ECO:0007744" key="12">
    <source>
        <dbReference type="PDB" id="2BNF"/>
    </source>
</evidence>
<evidence type="ECO:0007744" key="13">
    <source>
        <dbReference type="PDB" id="2V4Y"/>
    </source>
</evidence>
<evidence type="ECO:0007829" key="14">
    <source>
        <dbReference type="PDB" id="2BND"/>
    </source>
</evidence>
<evidence type="ECO:0007829" key="15">
    <source>
        <dbReference type="PDB" id="2BNE"/>
    </source>
</evidence>
<evidence type="ECO:0007829" key="16">
    <source>
        <dbReference type="PDB" id="2BNF"/>
    </source>
</evidence>
<feature type="initiator methionine" description="Removed" evidence="6">
    <location>
        <position position="1"/>
    </location>
</feature>
<feature type="chain" id="PRO_0000143842" description="Uridylate kinase">
    <location>
        <begin position="2"/>
        <end position="241"/>
    </location>
</feature>
<feature type="region of interest" description="Involved in allosteric activation by GTP" evidence="2">
    <location>
        <begin position="23"/>
        <end position="28"/>
    </location>
</feature>
<feature type="binding site" evidence="3 5 10 12 13">
    <location>
        <begin position="15"/>
        <end position="18"/>
    </location>
    <ligand>
        <name>ATP</name>
        <dbReference type="ChEBI" id="CHEBI:30616"/>
    </ligand>
</feature>
<feature type="binding site" evidence="3 5 10 12 13">
    <location>
        <position position="57"/>
    </location>
    <ligand>
        <name>UMP</name>
        <dbReference type="ChEBI" id="CHEBI:57865"/>
    </ligand>
</feature>
<feature type="binding site" evidence="3 5 10 12 13">
    <location>
        <position position="58"/>
    </location>
    <ligand>
        <name>ATP</name>
        <dbReference type="ChEBI" id="CHEBI:30616"/>
    </ligand>
</feature>
<feature type="binding site" evidence="3 10 11 12">
    <location>
        <position position="62"/>
    </location>
    <ligand>
        <name>ATP</name>
        <dbReference type="ChEBI" id="CHEBI:30616"/>
    </ligand>
</feature>
<feature type="binding site" evidence="3 5 11 12 13">
    <location>
        <position position="77"/>
    </location>
    <ligand>
        <name>UMP</name>
        <dbReference type="ChEBI" id="CHEBI:57865"/>
    </ligand>
</feature>
<feature type="binding site" evidence="5 13">
    <location>
        <begin position="92"/>
        <end position="96"/>
    </location>
    <ligand>
        <name>ATP</name>
        <dbReference type="ChEBI" id="CHEBI:30616"/>
    </ligand>
</feature>
<feature type="binding site" evidence="5 13">
    <location>
        <begin position="101"/>
        <end position="103"/>
    </location>
    <ligand>
        <name>ATP</name>
        <dbReference type="ChEBI" id="CHEBI:30616"/>
    </ligand>
</feature>
<feature type="binding site" evidence="3 5 10 11 12 13">
    <location>
        <begin position="138"/>
        <end position="145"/>
    </location>
    <ligand>
        <name>UMP</name>
        <dbReference type="ChEBI" id="CHEBI:57865"/>
    </ligand>
</feature>
<feature type="binding site" evidence="1">
    <location>
        <position position="165"/>
    </location>
    <ligand>
        <name>ATP</name>
        <dbReference type="ChEBI" id="CHEBI:30616"/>
    </ligand>
</feature>
<feature type="binding site" evidence="1">
    <location>
        <position position="171"/>
    </location>
    <ligand>
        <name>ATP</name>
        <dbReference type="ChEBI" id="CHEBI:30616"/>
    </ligand>
</feature>
<feature type="binding site" evidence="1">
    <location>
        <position position="174"/>
    </location>
    <ligand>
        <name>ATP</name>
        <dbReference type="ChEBI" id="CHEBI:30616"/>
    </ligand>
</feature>
<feature type="sequence variant" description="In Smba9.">
    <original>R</original>
    <variation>H</variation>
    <location>
        <position position="62"/>
    </location>
</feature>
<feature type="sequence variant" description="In Smba2.">
    <original>D</original>
    <variation>N</variation>
    <location>
        <position position="201"/>
    </location>
</feature>
<feature type="mutagenesis site" description="Loss of activation by GTP and decreased affinity for UTP." evidence="7">
    <original>R</original>
    <variation>H</variation>
    <location>
        <position position="62"/>
    </location>
</feature>
<feature type="mutagenesis site" description="Loss of activation by GTP and decreased affinity for UTP." evidence="7">
    <original>D</original>
    <variation>N</variation>
    <location>
        <position position="77"/>
    </location>
</feature>
<feature type="mutagenesis site" description="Loss of activation by GTP and of inhibition by UTP." evidence="5">
    <original>D</original>
    <variation>A</variation>
    <location>
        <position position="93"/>
    </location>
</feature>
<feature type="mutagenesis site" description="Loss of activation by GTP. Moderate loss of sensitivity to UTP inhibition. 4-fold and 2-fold decrease in affinity for UMP and ATP, respectively." evidence="3">
    <original>T</original>
    <variation>A</variation>
    <location>
        <position position="138"/>
    </location>
</feature>
<feature type="mutagenesis site" description="Loss of activation by GTP. Moderate loss of sensitivity to UTP inhibition." evidence="3 5">
    <original>N</original>
    <variation>A</variation>
    <location>
        <position position="140"/>
    </location>
</feature>
<feature type="mutagenesis site" description="Drastically reduced activity." evidence="7">
    <original>D</original>
    <variation>N</variation>
    <location>
        <position position="146"/>
    </location>
</feature>
<feature type="mutagenesis site" description="Increased solubility at neutral pH. Nearly no change in kinetic properties and stability." evidence="7">
    <original>D</original>
    <variation>N</variation>
    <location>
        <position position="159"/>
    </location>
</feature>
<feature type="mutagenesis site" description="Reduced UMP-binding affinity." evidence="7">
    <original>D</original>
    <variation>N</variation>
    <location>
        <position position="174"/>
    </location>
</feature>
<feature type="mutagenesis site" description="Loss of activation by GTP." evidence="6 7">
    <original>D</original>
    <variation>N</variation>
    <location>
        <position position="201"/>
    </location>
</feature>
<feature type="sequence conflict" description="In Ref. 1; CAA55388." evidence="9" ref="1">
    <original>AGLAKA</original>
    <variation>RWSGET</variation>
    <location>
        <begin position="64"/>
        <end position="69"/>
    </location>
</feature>
<feature type="strand" evidence="15">
    <location>
        <begin position="10"/>
        <end position="16"/>
    </location>
</feature>
<feature type="helix" evidence="15">
    <location>
        <begin position="18"/>
        <end position="21"/>
    </location>
</feature>
<feature type="strand" evidence="15">
    <location>
        <begin position="26"/>
        <end position="28"/>
    </location>
</feature>
<feature type="helix" evidence="15">
    <location>
        <begin position="31"/>
        <end position="46"/>
    </location>
</feature>
<feature type="strand" evidence="15">
    <location>
        <begin position="50"/>
        <end position="55"/>
    </location>
</feature>
<feature type="turn" evidence="15">
    <location>
        <begin position="58"/>
        <end position="60"/>
    </location>
</feature>
<feature type="helix" evidence="15">
    <location>
        <begin position="63"/>
        <end position="68"/>
    </location>
</feature>
<feature type="helix" evidence="15">
    <location>
        <begin position="73"/>
        <end position="97"/>
    </location>
</feature>
<feature type="strand" evidence="15">
    <location>
        <begin position="102"/>
        <end position="108"/>
    </location>
</feature>
<feature type="turn" evidence="15">
    <location>
        <begin position="111"/>
        <end position="113"/>
    </location>
</feature>
<feature type="strand" evidence="15">
    <location>
        <begin position="114"/>
        <end position="116"/>
    </location>
</feature>
<feature type="helix" evidence="15">
    <location>
        <begin position="119"/>
        <end position="127"/>
    </location>
</feature>
<feature type="strand" evidence="15">
    <location>
        <begin position="131"/>
        <end position="136"/>
    </location>
</feature>
<feature type="strand" evidence="16">
    <location>
        <begin position="139"/>
        <end position="142"/>
    </location>
</feature>
<feature type="helix" evidence="15">
    <location>
        <begin position="145"/>
        <end position="155"/>
    </location>
</feature>
<feature type="strand" evidence="15">
    <location>
        <begin position="159"/>
        <end position="169"/>
    </location>
</feature>
<feature type="strand" evidence="15">
    <location>
        <begin position="171"/>
        <end position="173"/>
    </location>
</feature>
<feature type="turn" evidence="14">
    <location>
        <begin position="175"/>
        <end position="177"/>
    </location>
</feature>
<feature type="strand" evidence="15">
    <location>
        <begin position="185"/>
        <end position="188"/>
    </location>
</feature>
<feature type="helix" evidence="15">
    <location>
        <begin position="189"/>
        <end position="194"/>
    </location>
</feature>
<feature type="helix" evidence="15">
    <location>
        <begin position="202"/>
        <end position="210"/>
    </location>
</feature>
<feature type="strand" evidence="15">
    <location>
        <begin position="215"/>
        <end position="219"/>
    </location>
</feature>
<feature type="helix" evidence="15">
    <location>
        <begin position="225"/>
        <end position="230"/>
    </location>
</feature>
<feature type="strand" evidence="15">
    <location>
        <begin position="236"/>
        <end position="240"/>
    </location>
</feature>
<sequence>MATNAKPVYKRILLKLSGEALQGTEGFGIDASILDRMAQEIKELVELGIQVGVVIGGGNLFRGAGLAKAGMNRVVGDHMGMLATVMNGLAMRDALHRAYVNARLMSAIPLNGVCDSYSWAEAISLLRNNRVVILSAGTGNPFFTTDSAACLRGIEIEADVVLKATKVDGVFTADPAKDPTATMYEQLTYSEVLEKELKVMDLAAFTLARDHKLPIRVFNMNKPGALRRVVMGEKEGTLITE</sequence>